<dbReference type="EC" id="6.3.2.6" evidence="1"/>
<dbReference type="EMBL" id="AL596170">
    <property type="protein sequence ID" value="CAC97114.1"/>
    <property type="molecule type" value="Genomic_DNA"/>
</dbReference>
<dbReference type="PIR" id="AB1668">
    <property type="entry name" value="AB1668"/>
</dbReference>
<dbReference type="RefSeq" id="WP_010991004.1">
    <property type="nucleotide sequence ID" value="NC_003212.1"/>
</dbReference>
<dbReference type="SMR" id="Q92AN6"/>
<dbReference type="STRING" id="272626.gene:17566239"/>
<dbReference type="KEGG" id="lin:purC"/>
<dbReference type="eggNOG" id="COG0152">
    <property type="taxonomic scope" value="Bacteria"/>
</dbReference>
<dbReference type="HOGENOM" id="CLU_061495_2_0_9"/>
<dbReference type="OrthoDB" id="9801549at2"/>
<dbReference type="UniPathway" id="UPA00074">
    <property type="reaction ID" value="UER00131"/>
</dbReference>
<dbReference type="Proteomes" id="UP000002513">
    <property type="component" value="Chromosome"/>
</dbReference>
<dbReference type="GO" id="GO:0005524">
    <property type="term" value="F:ATP binding"/>
    <property type="evidence" value="ECO:0007669"/>
    <property type="project" value="UniProtKB-KW"/>
</dbReference>
<dbReference type="GO" id="GO:0004639">
    <property type="term" value="F:phosphoribosylaminoimidazolesuccinocarboxamide synthase activity"/>
    <property type="evidence" value="ECO:0007669"/>
    <property type="project" value="UniProtKB-UniRule"/>
</dbReference>
<dbReference type="GO" id="GO:0006189">
    <property type="term" value="P:'de novo' IMP biosynthetic process"/>
    <property type="evidence" value="ECO:0007669"/>
    <property type="project" value="UniProtKB-UniRule"/>
</dbReference>
<dbReference type="GO" id="GO:0009236">
    <property type="term" value="P:cobalamin biosynthetic process"/>
    <property type="evidence" value="ECO:0007669"/>
    <property type="project" value="InterPro"/>
</dbReference>
<dbReference type="CDD" id="cd01415">
    <property type="entry name" value="SAICAR_synt_PurC"/>
    <property type="match status" value="1"/>
</dbReference>
<dbReference type="FunFam" id="3.30.470.20:FF:000006">
    <property type="entry name" value="Phosphoribosylaminoimidazole-succinocarboxamide synthase"/>
    <property type="match status" value="1"/>
</dbReference>
<dbReference type="Gene3D" id="3.30.470.20">
    <property type="entry name" value="ATP-grasp fold, B domain"/>
    <property type="match status" value="1"/>
</dbReference>
<dbReference type="Gene3D" id="3.30.200.20">
    <property type="entry name" value="Phosphorylase Kinase, domain 1"/>
    <property type="match status" value="1"/>
</dbReference>
<dbReference type="HAMAP" id="MF_00137">
    <property type="entry name" value="SAICAR_synth"/>
    <property type="match status" value="1"/>
</dbReference>
<dbReference type="InterPro" id="IPR028923">
    <property type="entry name" value="SAICAR_synt/ADE2_N"/>
</dbReference>
<dbReference type="InterPro" id="IPR033934">
    <property type="entry name" value="SAICAR_synt_PurC"/>
</dbReference>
<dbReference type="InterPro" id="IPR001636">
    <property type="entry name" value="SAICAR_synth"/>
</dbReference>
<dbReference type="InterPro" id="IPR050089">
    <property type="entry name" value="SAICAR_synthetase"/>
</dbReference>
<dbReference type="InterPro" id="IPR018236">
    <property type="entry name" value="SAICAR_synthetase_CS"/>
</dbReference>
<dbReference type="NCBIfam" id="TIGR00081">
    <property type="entry name" value="purC"/>
    <property type="match status" value="1"/>
</dbReference>
<dbReference type="PANTHER" id="PTHR43599">
    <property type="entry name" value="MULTIFUNCTIONAL PROTEIN ADE2"/>
    <property type="match status" value="1"/>
</dbReference>
<dbReference type="PANTHER" id="PTHR43599:SF3">
    <property type="entry name" value="SI:DKEY-6E2.2"/>
    <property type="match status" value="1"/>
</dbReference>
<dbReference type="Pfam" id="PF01259">
    <property type="entry name" value="SAICAR_synt"/>
    <property type="match status" value="1"/>
</dbReference>
<dbReference type="SUPFAM" id="SSF56104">
    <property type="entry name" value="SAICAR synthase-like"/>
    <property type="match status" value="1"/>
</dbReference>
<dbReference type="PROSITE" id="PS01057">
    <property type="entry name" value="SAICAR_SYNTHETASE_1"/>
    <property type="match status" value="1"/>
</dbReference>
<dbReference type="PROSITE" id="PS01058">
    <property type="entry name" value="SAICAR_SYNTHETASE_2"/>
    <property type="match status" value="1"/>
</dbReference>
<gene>
    <name evidence="1" type="primary">purC</name>
    <name type="ordered locus">lin1884</name>
</gene>
<evidence type="ECO:0000255" key="1">
    <source>
        <dbReference type="HAMAP-Rule" id="MF_00137"/>
    </source>
</evidence>
<sequence>MTNELLYEGKAKRLFKTDEAGVLRVAYKDDATALNGVRKESFAGKGELNNQITSLIFSYLAKEGISSHFIRAISETEQLVKEVSIIPLEVVVRNVMAGSLAKRLGKEEGEEIPNAIVEFYYKDDALDDPFINDDHVLYLDIATTNEMDTIRQAARSINKVLQELFNQMNITLIDFKLEFGRDAAGNILLADEISPDTCRLWDKETNQKLDKDVFRRNIGNLTDVYTEVLNRLKQVQN</sequence>
<proteinExistence type="inferred from homology"/>
<protein>
    <recommendedName>
        <fullName evidence="1">Phosphoribosylaminoimidazole-succinocarboxamide synthase</fullName>
        <ecNumber evidence="1">6.3.2.6</ecNumber>
    </recommendedName>
    <alternativeName>
        <fullName evidence="1">SAICAR synthetase</fullName>
    </alternativeName>
</protein>
<keyword id="KW-0067">ATP-binding</keyword>
<keyword id="KW-0436">Ligase</keyword>
<keyword id="KW-0547">Nucleotide-binding</keyword>
<keyword id="KW-0658">Purine biosynthesis</keyword>
<feature type="chain" id="PRO_0000100839" description="Phosphoribosylaminoimidazole-succinocarboxamide synthase">
    <location>
        <begin position="1"/>
        <end position="237"/>
    </location>
</feature>
<reference key="1">
    <citation type="journal article" date="2001" name="Science">
        <title>Comparative genomics of Listeria species.</title>
        <authorList>
            <person name="Glaser P."/>
            <person name="Frangeul L."/>
            <person name="Buchrieser C."/>
            <person name="Rusniok C."/>
            <person name="Amend A."/>
            <person name="Baquero F."/>
            <person name="Berche P."/>
            <person name="Bloecker H."/>
            <person name="Brandt P."/>
            <person name="Chakraborty T."/>
            <person name="Charbit A."/>
            <person name="Chetouani F."/>
            <person name="Couve E."/>
            <person name="de Daruvar A."/>
            <person name="Dehoux P."/>
            <person name="Domann E."/>
            <person name="Dominguez-Bernal G."/>
            <person name="Duchaud E."/>
            <person name="Durant L."/>
            <person name="Dussurget O."/>
            <person name="Entian K.-D."/>
            <person name="Fsihi H."/>
            <person name="Garcia-del Portillo F."/>
            <person name="Garrido P."/>
            <person name="Gautier L."/>
            <person name="Goebel W."/>
            <person name="Gomez-Lopez N."/>
            <person name="Hain T."/>
            <person name="Hauf J."/>
            <person name="Jackson D."/>
            <person name="Jones L.-M."/>
            <person name="Kaerst U."/>
            <person name="Kreft J."/>
            <person name="Kuhn M."/>
            <person name="Kunst F."/>
            <person name="Kurapkat G."/>
            <person name="Madueno E."/>
            <person name="Maitournam A."/>
            <person name="Mata Vicente J."/>
            <person name="Ng E."/>
            <person name="Nedjari H."/>
            <person name="Nordsiek G."/>
            <person name="Novella S."/>
            <person name="de Pablos B."/>
            <person name="Perez-Diaz J.-C."/>
            <person name="Purcell R."/>
            <person name="Remmel B."/>
            <person name="Rose M."/>
            <person name="Schlueter T."/>
            <person name="Simoes N."/>
            <person name="Tierrez A."/>
            <person name="Vazquez-Boland J.-A."/>
            <person name="Voss H."/>
            <person name="Wehland J."/>
            <person name="Cossart P."/>
        </authorList>
    </citation>
    <scope>NUCLEOTIDE SEQUENCE [LARGE SCALE GENOMIC DNA]</scope>
    <source>
        <strain>ATCC BAA-680 / CLIP 11262</strain>
    </source>
</reference>
<organism>
    <name type="scientific">Listeria innocua serovar 6a (strain ATCC BAA-680 / CLIP 11262)</name>
    <dbReference type="NCBI Taxonomy" id="272626"/>
    <lineage>
        <taxon>Bacteria</taxon>
        <taxon>Bacillati</taxon>
        <taxon>Bacillota</taxon>
        <taxon>Bacilli</taxon>
        <taxon>Bacillales</taxon>
        <taxon>Listeriaceae</taxon>
        <taxon>Listeria</taxon>
    </lineage>
</organism>
<comment type="catalytic activity">
    <reaction evidence="1">
        <text>5-amino-1-(5-phospho-D-ribosyl)imidazole-4-carboxylate + L-aspartate + ATP = (2S)-2-[5-amino-1-(5-phospho-beta-D-ribosyl)imidazole-4-carboxamido]succinate + ADP + phosphate + 2 H(+)</text>
        <dbReference type="Rhea" id="RHEA:22628"/>
        <dbReference type="ChEBI" id="CHEBI:15378"/>
        <dbReference type="ChEBI" id="CHEBI:29991"/>
        <dbReference type="ChEBI" id="CHEBI:30616"/>
        <dbReference type="ChEBI" id="CHEBI:43474"/>
        <dbReference type="ChEBI" id="CHEBI:58443"/>
        <dbReference type="ChEBI" id="CHEBI:77657"/>
        <dbReference type="ChEBI" id="CHEBI:456216"/>
        <dbReference type="EC" id="6.3.2.6"/>
    </reaction>
</comment>
<comment type="pathway">
    <text evidence="1">Purine metabolism; IMP biosynthesis via de novo pathway; 5-amino-1-(5-phospho-D-ribosyl)imidazole-4-carboxamide from 5-amino-1-(5-phospho-D-ribosyl)imidazole-4-carboxylate: step 1/2.</text>
</comment>
<comment type="similarity">
    <text evidence="1">Belongs to the SAICAR synthetase family.</text>
</comment>
<name>PUR7_LISIN</name>
<accession>Q92AN6</accession>